<feature type="chain" id="PRO_0000222501" description="RNA-3 uncharacterized 11.6 kDa protein">
    <location>
        <begin position="1"/>
        <end position="101"/>
    </location>
</feature>
<organism>
    <name type="scientific">Beet necrotic yellow vein mosaic virus (isolate Yugoslavia/G1)</name>
    <name type="common">BNYVV</name>
    <dbReference type="NCBI Taxonomy" id="12257"/>
    <lineage>
        <taxon>Viruses</taxon>
        <taxon>Riboviria</taxon>
        <taxon>Orthornavirae</taxon>
        <taxon>Kitrinoviricota</taxon>
        <taxon>Alsuviricetes</taxon>
        <taxon>Hepelivirales</taxon>
        <taxon>Benyviridae</taxon>
        <taxon>Benyvirus</taxon>
        <taxon>Beet necrotic yellow vein virus</taxon>
    </lineage>
</organism>
<proteinExistence type="predicted"/>
<dbReference type="EMBL" id="M36895">
    <property type="protein sequence ID" value="AAA42799.1"/>
    <property type="molecule type" value="Genomic_RNA"/>
</dbReference>
<dbReference type="InterPro" id="IPR008419">
    <property type="entry name" value="BNYVV_p25/p26"/>
</dbReference>
<dbReference type="Pfam" id="PF05744">
    <property type="entry name" value="Benyvirus_P25"/>
    <property type="match status" value="1"/>
</dbReference>
<accession>P19230</accession>
<organismHost>
    <name type="scientific">Beta macrocarpa</name>
    <name type="common">Beet</name>
    <name type="synonym">Beta vulgaris subsp. macrocarpa</name>
    <dbReference type="NCBI Taxonomy" id="343494"/>
</organismHost>
<organismHost>
    <name type="scientific">Beta vulgaris</name>
    <name type="common">Sugar beet</name>
    <dbReference type="NCBI Taxonomy" id="161934"/>
</organismHost>
<organismHost>
    <name type="scientific">Spinacia oleracea</name>
    <name type="common">Spinach</name>
    <dbReference type="NCBI Taxonomy" id="3562"/>
</organismHost>
<name>Y12K_BNYVG</name>
<reference key="1">
    <citation type="journal article" date="1985" name="J. Gen. Virol.">
        <title>Nucleotide sequence analysis of RNA-3 and RNA-4 of beet necrotic yellow vein virus, isolates F2 and G1.</title>
        <authorList>
            <person name="Bouzoubaa S."/>
            <person name="Guilley H."/>
            <person name="Jonard G."/>
            <person name="Richards K."/>
            <person name="Putz C."/>
        </authorList>
    </citation>
    <scope>NUCLEOTIDE SEQUENCE [GENOMIC RNA]</scope>
</reference>
<protein>
    <recommendedName>
        <fullName>RNA-3 uncharacterized 11.6 kDa protein</fullName>
    </recommendedName>
</protein>
<sequence>MGDILGAVYDLGHRPYLARRTVYEDRLILSTHGNICRAINLLTHDNRTTLVYHNNTKRIRFRGLLCALHGPYCGFRALCRVMLCSLPRLCDIPIRLVDDDD</sequence>